<gene>
    <name evidence="1" type="primary">panD</name>
    <name type="ordered locus">EcHS_A0135</name>
</gene>
<evidence type="ECO:0000255" key="1">
    <source>
        <dbReference type="HAMAP-Rule" id="MF_00446"/>
    </source>
</evidence>
<name>PAND_ECOHS</name>
<reference key="1">
    <citation type="journal article" date="2008" name="J. Bacteriol.">
        <title>The pangenome structure of Escherichia coli: comparative genomic analysis of E. coli commensal and pathogenic isolates.</title>
        <authorList>
            <person name="Rasko D.A."/>
            <person name="Rosovitz M.J."/>
            <person name="Myers G.S.A."/>
            <person name="Mongodin E.F."/>
            <person name="Fricke W.F."/>
            <person name="Gajer P."/>
            <person name="Crabtree J."/>
            <person name="Sebaihia M."/>
            <person name="Thomson N.R."/>
            <person name="Chaudhuri R."/>
            <person name="Henderson I.R."/>
            <person name="Sperandio V."/>
            <person name="Ravel J."/>
        </authorList>
    </citation>
    <scope>NUCLEOTIDE SEQUENCE [LARGE SCALE GENOMIC DNA]</scope>
    <source>
        <strain>HS</strain>
    </source>
</reference>
<proteinExistence type="inferred from homology"/>
<comment type="function">
    <text evidence="1">Catalyzes the pyruvoyl-dependent decarboxylation of aspartate to produce beta-alanine.</text>
</comment>
<comment type="catalytic activity">
    <reaction evidence="1">
        <text>L-aspartate + H(+) = beta-alanine + CO2</text>
        <dbReference type="Rhea" id="RHEA:19497"/>
        <dbReference type="ChEBI" id="CHEBI:15378"/>
        <dbReference type="ChEBI" id="CHEBI:16526"/>
        <dbReference type="ChEBI" id="CHEBI:29991"/>
        <dbReference type="ChEBI" id="CHEBI:57966"/>
        <dbReference type="EC" id="4.1.1.11"/>
    </reaction>
</comment>
<comment type="cofactor">
    <cofactor evidence="1">
        <name>pyruvate</name>
        <dbReference type="ChEBI" id="CHEBI:15361"/>
    </cofactor>
    <text evidence="1">Binds 1 pyruvoyl group covalently per subunit.</text>
</comment>
<comment type="pathway">
    <text evidence="1">Cofactor biosynthesis; (R)-pantothenate biosynthesis; beta-alanine from L-aspartate: step 1/1.</text>
</comment>
<comment type="subunit">
    <text evidence="1">Heterooctamer of four alpha and four beta subunits.</text>
</comment>
<comment type="subcellular location">
    <subcellularLocation>
        <location evidence="1">Cytoplasm</location>
    </subcellularLocation>
</comment>
<comment type="PTM">
    <text evidence="1">Is synthesized initially as an inactive proenzyme, which is activated by self-cleavage at a specific serine bond to produce a beta-subunit with a hydroxyl group at its C-terminus and an alpha-subunit with a pyruvoyl group at its N-terminus.</text>
</comment>
<comment type="similarity">
    <text evidence="1">Belongs to the PanD family.</text>
</comment>
<feature type="chain" id="PRO_1000060270" description="Aspartate 1-decarboxylase beta chain" evidence="1">
    <location>
        <begin position="1"/>
        <end position="24"/>
    </location>
</feature>
<feature type="chain" id="PRO_1000060271" description="Aspartate 1-decarboxylase alpha chain" evidence="1">
    <location>
        <begin position="25"/>
        <end position="126"/>
    </location>
</feature>
<feature type="active site" description="Schiff-base intermediate with substrate; via pyruvic acid" evidence="1">
    <location>
        <position position="25"/>
    </location>
</feature>
<feature type="active site" description="Proton donor" evidence="1">
    <location>
        <position position="58"/>
    </location>
</feature>
<feature type="binding site" evidence="1">
    <location>
        <position position="57"/>
    </location>
    <ligand>
        <name>substrate</name>
    </ligand>
</feature>
<feature type="binding site" evidence="1">
    <location>
        <begin position="73"/>
        <end position="75"/>
    </location>
    <ligand>
        <name>substrate</name>
    </ligand>
</feature>
<feature type="modified residue" description="Pyruvic acid (Ser)" evidence="1">
    <location>
        <position position="25"/>
    </location>
</feature>
<organism>
    <name type="scientific">Escherichia coli O9:H4 (strain HS)</name>
    <dbReference type="NCBI Taxonomy" id="331112"/>
    <lineage>
        <taxon>Bacteria</taxon>
        <taxon>Pseudomonadati</taxon>
        <taxon>Pseudomonadota</taxon>
        <taxon>Gammaproteobacteria</taxon>
        <taxon>Enterobacterales</taxon>
        <taxon>Enterobacteriaceae</taxon>
        <taxon>Escherichia</taxon>
    </lineage>
</organism>
<protein>
    <recommendedName>
        <fullName evidence="1">Aspartate 1-decarboxylase</fullName>
        <ecNumber evidence="1">4.1.1.11</ecNumber>
    </recommendedName>
    <alternativeName>
        <fullName evidence="1">Aspartate alpha-decarboxylase</fullName>
    </alternativeName>
    <component>
        <recommendedName>
            <fullName evidence="1">Aspartate 1-decarboxylase beta chain</fullName>
        </recommendedName>
    </component>
    <component>
        <recommendedName>
            <fullName evidence="1">Aspartate 1-decarboxylase alpha chain</fullName>
        </recommendedName>
    </component>
</protein>
<dbReference type="EC" id="4.1.1.11" evidence="1"/>
<dbReference type="EMBL" id="CP000802">
    <property type="protein sequence ID" value="ABV04534.1"/>
    <property type="molecule type" value="Genomic_DNA"/>
</dbReference>
<dbReference type="RefSeq" id="WP_000621515.1">
    <property type="nucleotide sequence ID" value="NC_009800.1"/>
</dbReference>
<dbReference type="SMR" id="A7ZW80"/>
<dbReference type="GeneID" id="93777305"/>
<dbReference type="KEGG" id="ecx:EcHS_A0135"/>
<dbReference type="HOGENOM" id="CLU_115305_2_1_6"/>
<dbReference type="UniPathway" id="UPA00028">
    <property type="reaction ID" value="UER00002"/>
</dbReference>
<dbReference type="GO" id="GO:0005829">
    <property type="term" value="C:cytosol"/>
    <property type="evidence" value="ECO:0007669"/>
    <property type="project" value="TreeGrafter"/>
</dbReference>
<dbReference type="GO" id="GO:0004068">
    <property type="term" value="F:aspartate 1-decarboxylase activity"/>
    <property type="evidence" value="ECO:0007669"/>
    <property type="project" value="UniProtKB-UniRule"/>
</dbReference>
<dbReference type="GO" id="GO:0006523">
    <property type="term" value="P:alanine biosynthetic process"/>
    <property type="evidence" value="ECO:0007669"/>
    <property type="project" value="InterPro"/>
</dbReference>
<dbReference type="GO" id="GO:0015940">
    <property type="term" value="P:pantothenate biosynthetic process"/>
    <property type="evidence" value="ECO:0007669"/>
    <property type="project" value="UniProtKB-UniRule"/>
</dbReference>
<dbReference type="CDD" id="cd06919">
    <property type="entry name" value="Asp_decarbox"/>
    <property type="match status" value="1"/>
</dbReference>
<dbReference type="FunFam" id="2.40.40.20:FF:000004">
    <property type="entry name" value="Aspartate 1-decarboxylase"/>
    <property type="match status" value="1"/>
</dbReference>
<dbReference type="Gene3D" id="2.40.40.20">
    <property type="match status" value="1"/>
</dbReference>
<dbReference type="HAMAP" id="MF_00446">
    <property type="entry name" value="PanD"/>
    <property type="match status" value="1"/>
</dbReference>
<dbReference type="InterPro" id="IPR009010">
    <property type="entry name" value="Asp_de-COase-like_dom_sf"/>
</dbReference>
<dbReference type="InterPro" id="IPR003190">
    <property type="entry name" value="Asp_decarbox"/>
</dbReference>
<dbReference type="NCBIfam" id="TIGR00223">
    <property type="entry name" value="panD"/>
    <property type="match status" value="1"/>
</dbReference>
<dbReference type="PANTHER" id="PTHR21012">
    <property type="entry name" value="ASPARTATE 1-DECARBOXYLASE"/>
    <property type="match status" value="1"/>
</dbReference>
<dbReference type="PANTHER" id="PTHR21012:SF0">
    <property type="entry name" value="ASPARTATE 1-DECARBOXYLASE"/>
    <property type="match status" value="1"/>
</dbReference>
<dbReference type="Pfam" id="PF02261">
    <property type="entry name" value="Asp_decarbox"/>
    <property type="match status" value="1"/>
</dbReference>
<dbReference type="PIRSF" id="PIRSF006246">
    <property type="entry name" value="Asp_decarbox"/>
    <property type="match status" value="1"/>
</dbReference>
<dbReference type="SUPFAM" id="SSF50692">
    <property type="entry name" value="ADC-like"/>
    <property type="match status" value="1"/>
</dbReference>
<sequence length="126" mass="13834">MIRTMLQGKLHRVKVTHADLHYEGSCAIDQDFLDAAGILENEAIDIWNVTNGKRFSTYAIAAERGSRIISVNGAAAHCASVGDIVIIASFVTMPDEEARTWRPNVAYFEGDNEMKRTAKAIPVQVA</sequence>
<keyword id="KW-0068">Autocatalytic cleavage</keyword>
<keyword id="KW-0963">Cytoplasm</keyword>
<keyword id="KW-0210">Decarboxylase</keyword>
<keyword id="KW-0456">Lyase</keyword>
<keyword id="KW-0566">Pantothenate biosynthesis</keyword>
<keyword id="KW-0670">Pyruvate</keyword>
<keyword id="KW-0704">Schiff base</keyword>
<keyword id="KW-0865">Zymogen</keyword>
<accession>A7ZW80</accession>